<comment type="function">
    <text evidence="5">Major contributor to triacylglycerol (TAG) synthesis and oil accumulation in developing seeds. Catalyzes the acylation of the sn-3 hydroxy group of sn-1,2-diacylglycerol using acyl-CoA. Has a marked preference for oleoyl-CoA as substrate.</text>
</comment>
<comment type="catalytic activity">
    <reaction evidence="7">
        <text>an acyl-CoA + a 1,2-diacyl-sn-glycerol = a triacyl-sn-glycerol + CoA</text>
        <dbReference type="Rhea" id="RHEA:10868"/>
        <dbReference type="ChEBI" id="CHEBI:17815"/>
        <dbReference type="ChEBI" id="CHEBI:57287"/>
        <dbReference type="ChEBI" id="CHEBI:58342"/>
        <dbReference type="ChEBI" id="CHEBI:64615"/>
        <dbReference type="EC" id="2.3.1.20"/>
    </reaction>
</comment>
<comment type="pathway">
    <text evidence="7">Glycerolipid metabolism; triacylglycerol biosynthesis.</text>
</comment>
<comment type="subcellular location">
    <subcellularLocation>
        <location evidence="2">Endoplasmic reticulum membrane</location>
        <topology evidence="3">Multi-pass membrane protein</topology>
    </subcellularLocation>
</comment>
<comment type="similarity">
    <text evidence="7">Belongs to the membrane-bound acyltransferase family. Sterol o-acyltransferase subfamily.</text>
</comment>
<keyword id="KW-0012">Acyltransferase</keyword>
<keyword id="KW-0256">Endoplasmic reticulum</keyword>
<keyword id="KW-0319">Glycerol metabolism</keyword>
<keyword id="KW-0444">Lipid biosynthesis</keyword>
<keyword id="KW-0443">Lipid metabolism</keyword>
<keyword id="KW-0472">Membrane</keyword>
<keyword id="KW-0808">Transferase</keyword>
<keyword id="KW-0812">Transmembrane</keyword>
<keyword id="KW-1133">Transmembrane helix</keyword>
<accession>A0A161IUT7</accession>
<organism>
    <name type="scientific">Corylus americana</name>
    <name type="common">American hazelnut</name>
    <dbReference type="NCBI Taxonomy" id="78632"/>
    <lineage>
        <taxon>Eukaryota</taxon>
        <taxon>Viridiplantae</taxon>
        <taxon>Streptophyta</taxon>
        <taxon>Embryophyta</taxon>
        <taxon>Tracheophyta</taxon>
        <taxon>Spermatophyta</taxon>
        <taxon>Magnoliopsida</taxon>
        <taxon>eudicotyledons</taxon>
        <taxon>Gunneridae</taxon>
        <taxon>Pentapetalae</taxon>
        <taxon>rosids</taxon>
        <taxon>fabids</taxon>
        <taxon>Fagales</taxon>
        <taxon>Betulaceae</taxon>
        <taxon>Corylus</taxon>
    </lineage>
</organism>
<dbReference type="EC" id="2.3.1.20" evidence="5"/>
<dbReference type="EMBL" id="KU744408">
    <property type="protein sequence ID" value="ANC50790.1"/>
    <property type="molecule type" value="mRNA"/>
</dbReference>
<dbReference type="SMR" id="A0A161IUT7"/>
<dbReference type="BRENDA" id="2.3.1.20">
    <property type="organism ID" value="17273"/>
</dbReference>
<dbReference type="UniPathway" id="UPA00282"/>
<dbReference type="GO" id="GO:0009941">
    <property type="term" value="C:chloroplast envelope"/>
    <property type="evidence" value="ECO:0007669"/>
    <property type="project" value="TreeGrafter"/>
</dbReference>
<dbReference type="GO" id="GO:0005789">
    <property type="term" value="C:endoplasmic reticulum membrane"/>
    <property type="evidence" value="ECO:0000250"/>
    <property type="project" value="UniProtKB"/>
</dbReference>
<dbReference type="GO" id="GO:0004144">
    <property type="term" value="F:diacylglycerol O-acyltransferase activity"/>
    <property type="evidence" value="ECO:0000314"/>
    <property type="project" value="UniProtKB"/>
</dbReference>
<dbReference type="GO" id="GO:0006071">
    <property type="term" value="P:glycerol metabolic process"/>
    <property type="evidence" value="ECO:0007669"/>
    <property type="project" value="UniProtKB-KW"/>
</dbReference>
<dbReference type="GO" id="GO:0019432">
    <property type="term" value="P:triglyceride biosynthetic process"/>
    <property type="evidence" value="ECO:0000314"/>
    <property type="project" value="UniProtKB"/>
</dbReference>
<dbReference type="InterPro" id="IPR027251">
    <property type="entry name" value="Diacylglycerol_acylTrfase1"/>
</dbReference>
<dbReference type="InterPro" id="IPR004299">
    <property type="entry name" value="MBOAT_fam"/>
</dbReference>
<dbReference type="InterPro" id="IPR014371">
    <property type="entry name" value="Oat_ACAT_DAG_ARE"/>
</dbReference>
<dbReference type="PANTHER" id="PTHR10408:SF7">
    <property type="entry name" value="DIACYLGLYCEROL O-ACYLTRANSFERASE 1"/>
    <property type="match status" value="1"/>
</dbReference>
<dbReference type="PANTHER" id="PTHR10408">
    <property type="entry name" value="STEROL O-ACYLTRANSFERASE"/>
    <property type="match status" value="1"/>
</dbReference>
<dbReference type="Pfam" id="PF03062">
    <property type="entry name" value="MBOAT"/>
    <property type="match status" value="1"/>
</dbReference>
<dbReference type="PIRSF" id="PIRSF000439">
    <property type="entry name" value="Oat_ACAT_DAG_ARE"/>
    <property type="match status" value="1"/>
</dbReference>
<dbReference type="PIRSF" id="PIRSF500231">
    <property type="entry name" value="Oat_dag"/>
    <property type="match status" value="1"/>
</dbReference>
<name>DGAT1_CORAE</name>
<proteinExistence type="evidence at protein level"/>
<reference key="1">
    <citation type="journal article" date="2016" name="Plant Physiol.">
        <title>An improved variant of soybean type 1 diacylglycerol acyltransferase increases the oil content and decreases the soluble carbohydrate content of soybeans.</title>
        <authorList>
            <person name="Roesler K."/>
            <person name="Shen B."/>
            <person name="Bermudez E."/>
            <person name="Li C."/>
            <person name="Hunt J."/>
            <person name="Damude H.G."/>
            <person name="Ripp K.G."/>
            <person name="Everard J.D."/>
            <person name="Booth J.R."/>
            <person name="Castaneda L."/>
            <person name="Feng L."/>
            <person name="Meyer K."/>
        </authorList>
    </citation>
    <scope>NUCLEOTIDE SEQUENCE [MRNA]</scope>
    <scope>FUNCTION</scope>
    <scope>CATALYTIC ACTIVITY</scope>
</reference>
<protein>
    <recommendedName>
        <fullName evidence="7">Diacylglycerol O-acyltransferase 1</fullName>
        <shortName evidence="6">CaDGAT1</shortName>
        <ecNumber evidence="5">2.3.1.20</ecNumber>
    </recommendedName>
</protein>
<evidence type="ECO:0000250" key="1">
    <source>
        <dbReference type="UniProtKB" id="O75907"/>
    </source>
</evidence>
<evidence type="ECO:0000250" key="2">
    <source>
        <dbReference type="UniProtKB" id="Q5GKZ7"/>
    </source>
</evidence>
<evidence type="ECO:0000255" key="3"/>
<evidence type="ECO:0000256" key="4">
    <source>
        <dbReference type="SAM" id="MobiDB-lite"/>
    </source>
</evidence>
<evidence type="ECO:0000269" key="5">
    <source>
    </source>
</evidence>
<evidence type="ECO:0000303" key="6">
    <source>
    </source>
</evidence>
<evidence type="ECO:0000305" key="7"/>
<sequence>MAISDMPESTGTTATTATMPHGGSDLRRRHNATETTEVSDSNSKTTDPDSGNSVRESVRVRDSSTDESLARKSCEDDGSRSEVVIESANPVTNGNDGGEKIANGEDRRTDFAAVKLAYRPSVPAHRRIKESPLSSDAIFRQSHAGLFNLCIVVLVAVNSRLIIENLMKYGWLIKTGFWFSSRSLRDWPLLMCCLTLPIFPAAAFVVEKLVQWKYISEPVVLLLHFIITTAALLYPVFVILRCDSVVLSGVTLMLFACIVWLKLVSYTHTNYDMRALAKSIDKGDVLPNSLNTDYPYSVSFKSLAYFMVAPTLCYQTSYPRTACIRKSWVVRQLVKLIIFTGVMGFIIEQYINPIVKNSQHPLKGNLLYAIERVLKLSVPNLYVWLCMFYCFFHLWLNILAELLRFGDREFYKDWWNAKTVEEYWRLWNMPVHKWMVRHIYFPCLRNGIPKGVAILIAFFVSAIFHELCIAVPCHIFKLWAFIGIMCQVPLVLITNYLQNKFRNSMVGNMIFWFFFCILGQPMCVLLYYHDLMNRKGKTE</sequence>
<gene>
    <name evidence="6" type="primary">DGAT1</name>
</gene>
<feature type="chain" id="PRO_0000438908" description="Diacylglycerol O-acyltransferase 1">
    <location>
        <begin position="1"/>
        <end position="539"/>
    </location>
</feature>
<feature type="transmembrane region" description="Helical" evidence="3">
    <location>
        <begin position="143"/>
        <end position="163"/>
    </location>
</feature>
<feature type="transmembrane region" description="Helical" evidence="3">
    <location>
        <begin position="187"/>
        <end position="207"/>
    </location>
</feature>
<feature type="transmembrane region" description="Helical" evidence="3">
    <location>
        <begin position="219"/>
        <end position="239"/>
    </location>
</feature>
<feature type="transmembrane region" description="Helical" evidence="3">
    <location>
        <begin position="244"/>
        <end position="264"/>
    </location>
</feature>
<feature type="transmembrane region" description="Helical" evidence="3">
    <location>
        <begin position="294"/>
        <end position="314"/>
    </location>
</feature>
<feature type="transmembrane region" description="Helical" evidence="3">
    <location>
        <begin position="334"/>
        <end position="354"/>
    </location>
</feature>
<feature type="transmembrane region" description="Helical" evidence="3">
    <location>
        <begin position="383"/>
        <end position="403"/>
    </location>
</feature>
<feature type="transmembrane region" description="Helical" evidence="3">
    <location>
        <begin position="451"/>
        <end position="471"/>
    </location>
</feature>
<feature type="transmembrane region" description="Helical" evidence="3">
    <location>
        <begin position="473"/>
        <end position="493"/>
    </location>
</feature>
<feature type="transmembrane region" description="Helical" evidence="3">
    <location>
        <begin position="506"/>
        <end position="526"/>
    </location>
</feature>
<feature type="region of interest" description="Disordered" evidence="4">
    <location>
        <begin position="1"/>
        <end position="104"/>
    </location>
</feature>
<feature type="short sequence motif" description="FYXDWWN motif" evidence="1">
    <location>
        <begin position="410"/>
        <end position="416"/>
    </location>
</feature>
<feature type="compositionally biased region" description="Polar residues" evidence="4">
    <location>
        <begin position="33"/>
        <end position="52"/>
    </location>
</feature>
<feature type="compositionally biased region" description="Basic and acidic residues" evidence="4">
    <location>
        <begin position="56"/>
        <end position="80"/>
    </location>
</feature>
<feature type="active site" evidence="1">
    <location>
        <position position="465"/>
    </location>
</feature>